<protein>
    <recommendedName>
        <fullName evidence="1">Small ribosomal subunit protein uS2</fullName>
    </recommendedName>
    <alternativeName>
        <fullName evidence="3">30S ribosomal protein S2</fullName>
    </alternativeName>
</protein>
<dbReference type="EMBL" id="AE007869">
    <property type="protein sequence ID" value="AAK87166.2"/>
    <property type="molecule type" value="Genomic_DNA"/>
</dbReference>
<dbReference type="PIR" id="AF2745">
    <property type="entry name" value="AF2745"/>
</dbReference>
<dbReference type="PIR" id="E97526">
    <property type="entry name" value="E97526"/>
</dbReference>
<dbReference type="RefSeq" id="NP_354381.2">
    <property type="nucleotide sequence ID" value="NC_003062.2"/>
</dbReference>
<dbReference type="RefSeq" id="WP_006312546.1">
    <property type="nucleotide sequence ID" value="NC_003062.2"/>
</dbReference>
<dbReference type="SMR" id="Q8UFM3"/>
<dbReference type="STRING" id="176299.Atu1374"/>
<dbReference type="EnsemblBacteria" id="AAK87166">
    <property type="protein sequence ID" value="AAK87166"/>
    <property type="gene ID" value="Atu1374"/>
</dbReference>
<dbReference type="GeneID" id="1133412"/>
<dbReference type="KEGG" id="atu:Atu1374"/>
<dbReference type="PATRIC" id="fig|176299.10.peg.1396"/>
<dbReference type="eggNOG" id="COG0052">
    <property type="taxonomic scope" value="Bacteria"/>
</dbReference>
<dbReference type="HOGENOM" id="CLU_040318_2_1_5"/>
<dbReference type="OrthoDB" id="9808036at2"/>
<dbReference type="PhylomeDB" id="Q8UFM3"/>
<dbReference type="BioCyc" id="AGRO:ATU1374-MONOMER"/>
<dbReference type="Proteomes" id="UP000000813">
    <property type="component" value="Chromosome circular"/>
</dbReference>
<dbReference type="GO" id="GO:0022627">
    <property type="term" value="C:cytosolic small ribosomal subunit"/>
    <property type="evidence" value="ECO:0007669"/>
    <property type="project" value="TreeGrafter"/>
</dbReference>
<dbReference type="GO" id="GO:0003735">
    <property type="term" value="F:structural constituent of ribosome"/>
    <property type="evidence" value="ECO:0007669"/>
    <property type="project" value="InterPro"/>
</dbReference>
<dbReference type="GO" id="GO:0006412">
    <property type="term" value="P:translation"/>
    <property type="evidence" value="ECO:0007669"/>
    <property type="project" value="UniProtKB-UniRule"/>
</dbReference>
<dbReference type="CDD" id="cd01425">
    <property type="entry name" value="RPS2"/>
    <property type="match status" value="1"/>
</dbReference>
<dbReference type="Gene3D" id="3.40.50.10490">
    <property type="entry name" value="Glucose-6-phosphate isomerase like protein, domain 1"/>
    <property type="match status" value="1"/>
</dbReference>
<dbReference type="Gene3D" id="1.10.287.610">
    <property type="entry name" value="Helix hairpin bin"/>
    <property type="match status" value="1"/>
</dbReference>
<dbReference type="HAMAP" id="MF_00291_B">
    <property type="entry name" value="Ribosomal_uS2_B"/>
    <property type="match status" value="1"/>
</dbReference>
<dbReference type="InterPro" id="IPR001865">
    <property type="entry name" value="Ribosomal_uS2"/>
</dbReference>
<dbReference type="InterPro" id="IPR005706">
    <property type="entry name" value="Ribosomal_uS2_bac/mit/plastid"/>
</dbReference>
<dbReference type="InterPro" id="IPR018130">
    <property type="entry name" value="Ribosomal_uS2_CS"/>
</dbReference>
<dbReference type="InterPro" id="IPR023591">
    <property type="entry name" value="Ribosomal_uS2_flav_dom_sf"/>
</dbReference>
<dbReference type="NCBIfam" id="TIGR01011">
    <property type="entry name" value="rpsB_bact"/>
    <property type="match status" value="1"/>
</dbReference>
<dbReference type="PANTHER" id="PTHR12534">
    <property type="entry name" value="30S RIBOSOMAL PROTEIN S2 PROKARYOTIC AND ORGANELLAR"/>
    <property type="match status" value="1"/>
</dbReference>
<dbReference type="PANTHER" id="PTHR12534:SF0">
    <property type="entry name" value="SMALL RIBOSOMAL SUBUNIT PROTEIN US2M"/>
    <property type="match status" value="1"/>
</dbReference>
<dbReference type="Pfam" id="PF00318">
    <property type="entry name" value="Ribosomal_S2"/>
    <property type="match status" value="1"/>
</dbReference>
<dbReference type="PRINTS" id="PR00395">
    <property type="entry name" value="RIBOSOMALS2"/>
</dbReference>
<dbReference type="SUPFAM" id="SSF52313">
    <property type="entry name" value="Ribosomal protein S2"/>
    <property type="match status" value="1"/>
</dbReference>
<dbReference type="PROSITE" id="PS00962">
    <property type="entry name" value="RIBOSOMAL_S2_1"/>
    <property type="match status" value="1"/>
</dbReference>
<dbReference type="PROSITE" id="PS00963">
    <property type="entry name" value="RIBOSOMAL_S2_2"/>
    <property type="match status" value="1"/>
</dbReference>
<sequence length="255" mass="28200">MALPDFSMRQLLEAGVHFGHQTHRWNPKMKPYIFGDRNNIHIIDLAQTVPMLSRALQVVSDTVARGGRVLFVGTKRQASEIIADSAKRSAQYYVNSRWLGGMMTNWKTISNSIQRLRKVDEILNSEGSGYSKKERLTLEREREKLEKALGGIRDMGGVPDLMFIIDTNKEKIAIEEAKRLGIPVVAIIDSNCDPDHIDYPIPGNDDASRAISLYCDLIARAAIDGIARQQGASGRDIGASEEAPIEPALEDEAGA</sequence>
<reference key="1">
    <citation type="journal article" date="2001" name="Science">
        <title>The genome of the natural genetic engineer Agrobacterium tumefaciens C58.</title>
        <authorList>
            <person name="Wood D.W."/>
            <person name="Setubal J.C."/>
            <person name="Kaul R."/>
            <person name="Monks D.E."/>
            <person name="Kitajima J.P."/>
            <person name="Okura V.K."/>
            <person name="Zhou Y."/>
            <person name="Chen L."/>
            <person name="Wood G.E."/>
            <person name="Almeida N.F. Jr."/>
            <person name="Woo L."/>
            <person name="Chen Y."/>
            <person name="Paulsen I.T."/>
            <person name="Eisen J.A."/>
            <person name="Karp P.D."/>
            <person name="Bovee D. Sr."/>
            <person name="Chapman P."/>
            <person name="Clendenning J."/>
            <person name="Deatherage G."/>
            <person name="Gillet W."/>
            <person name="Grant C."/>
            <person name="Kutyavin T."/>
            <person name="Levy R."/>
            <person name="Li M.-J."/>
            <person name="McClelland E."/>
            <person name="Palmieri A."/>
            <person name="Raymond C."/>
            <person name="Rouse G."/>
            <person name="Saenphimmachak C."/>
            <person name="Wu Z."/>
            <person name="Romero P."/>
            <person name="Gordon D."/>
            <person name="Zhang S."/>
            <person name="Yoo H."/>
            <person name="Tao Y."/>
            <person name="Biddle P."/>
            <person name="Jung M."/>
            <person name="Krespan W."/>
            <person name="Perry M."/>
            <person name="Gordon-Kamm B."/>
            <person name="Liao L."/>
            <person name="Kim S."/>
            <person name="Hendrick C."/>
            <person name="Zhao Z.-Y."/>
            <person name="Dolan M."/>
            <person name="Chumley F."/>
            <person name="Tingey S.V."/>
            <person name="Tomb J.-F."/>
            <person name="Gordon M.P."/>
            <person name="Olson M.V."/>
            <person name="Nester E.W."/>
        </authorList>
    </citation>
    <scope>NUCLEOTIDE SEQUENCE [LARGE SCALE GENOMIC DNA]</scope>
    <source>
        <strain>C58 / ATCC 33970</strain>
    </source>
</reference>
<reference key="2">
    <citation type="journal article" date="2001" name="Science">
        <title>Genome sequence of the plant pathogen and biotechnology agent Agrobacterium tumefaciens C58.</title>
        <authorList>
            <person name="Goodner B."/>
            <person name="Hinkle G."/>
            <person name="Gattung S."/>
            <person name="Miller N."/>
            <person name="Blanchard M."/>
            <person name="Qurollo B."/>
            <person name="Goldman B.S."/>
            <person name="Cao Y."/>
            <person name="Askenazi M."/>
            <person name="Halling C."/>
            <person name="Mullin L."/>
            <person name="Houmiel K."/>
            <person name="Gordon J."/>
            <person name="Vaudin M."/>
            <person name="Iartchouk O."/>
            <person name="Epp A."/>
            <person name="Liu F."/>
            <person name="Wollam C."/>
            <person name="Allinger M."/>
            <person name="Doughty D."/>
            <person name="Scott C."/>
            <person name="Lappas C."/>
            <person name="Markelz B."/>
            <person name="Flanagan C."/>
            <person name="Crowell C."/>
            <person name="Gurson J."/>
            <person name="Lomo C."/>
            <person name="Sear C."/>
            <person name="Strub G."/>
            <person name="Cielo C."/>
            <person name="Slater S."/>
        </authorList>
    </citation>
    <scope>NUCLEOTIDE SEQUENCE [LARGE SCALE GENOMIC DNA]</scope>
    <source>
        <strain>C58 / ATCC 33970</strain>
    </source>
</reference>
<comment type="similarity">
    <text evidence="1">Belongs to the universal ribosomal protein uS2 family.</text>
</comment>
<gene>
    <name evidence="1" type="primary">rpsB</name>
    <name type="ordered locus">Atu1374</name>
    <name type="ORF">AGR_C_2539</name>
</gene>
<accession>Q8UFM3</accession>
<name>RS2_AGRFC</name>
<feature type="chain" id="PRO_0000134118" description="Small ribosomal subunit protein uS2">
    <location>
        <begin position="1"/>
        <end position="255"/>
    </location>
</feature>
<feature type="region of interest" description="Disordered" evidence="2">
    <location>
        <begin position="232"/>
        <end position="255"/>
    </location>
</feature>
<organism>
    <name type="scientific">Agrobacterium fabrum (strain C58 / ATCC 33970)</name>
    <name type="common">Agrobacterium tumefaciens (strain C58)</name>
    <dbReference type="NCBI Taxonomy" id="176299"/>
    <lineage>
        <taxon>Bacteria</taxon>
        <taxon>Pseudomonadati</taxon>
        <taxon>Pseudomonadota</taxon>
        <taxon>Alphaproteobacteria</taxon>
        <taxon>Hyphomicrobiales</taxon>
        <taxon>Rhizobiaceae</taxon>
        <taxon>Rhizobium/Agrobacterium group</taxon>
        <taxon>Agrobacterium</taxon>
        <taxon>Agrobacterium tumefaciens complex</taxon>
    </lineage>
</organism>
<proteinExistence type="inferred from homology"/>
<evidence type="ECO:0000255" key="1">
    <source>
        <dbReference type="HAMAP-Rule" id="MF_00291"/>
    </source>
</evidence>
<evidence type="ECO:0000256" key="2">
    <source>
        <dbReference type="SAM" id="MobiDB-lite"/>
    </source>
</evidence>
<evidence type="ECO:0000305" key="3"/>
<keyword id="KW-1185">Reference proteome</keyword>
<keyword id="KW-0687">Ribonucleoprotein</keyword>
<keyword id="KW-0689">Ribosomal protein</keyword>